<dbReference type="EMBL" id="DS480395">
    <property type="protein sequence ID" value="EDO17958.1"/>
    <property type="molecule type" value="Genomic_DNA"/>
</dbReference>
<dbReference type="RefSeq" id="XP_001645816.1">
    <property type="nucleotide sequence ID" value="XM_001645766.1"/>
</dbReference>
<dbReference type="SMR" id="A7TI92"/>
<dbReference type="FunCoup" id="A7TI92">
    <property type="interactions" value="27"/>
</dbReference>
<dbReference type="STRING" id="436907.A7TI92"/>
<dbReference type="GeneID" id="5546216"/>
<dbReference type="KEGG" id="vpo:Kpol_1054p3"/>
<dbReference type="eggNOG" id="ENOG502S6EF">
    <property type="taxonomic scope" value="Eukaryota"/>
</dbReference>
<dbReference type="HOGENOM" id="CLU_147114_2_2_1"/>
<dbReference type="InParanoid" id="A7TI92"/>
<dbReference type="OMA" id="KYKLRIH"/>
<dbReference type="OrthoDB" id="529194at2759"/>
<dbReference type="PhylomeDB" id="A7TI92"/>
<dbReference type="Proteomes" id="UP000000267">
    <property type="component" value="Unassembled WGS sequence"/>
</dbReference>
<dbReference type="GO" id="GO:0005759">
    <property type="term" value="C:mitochondrial matrix"/>
    <property type="evidence" value="ECO:0007669"/>
    <property type="project" value="UniProtKB-SubCell"/>
</dbReference>
<dbReference type="GO" id="GO:0044183">
    <property type="term" value="F:protein folding chaperone"/>
    <property type="evidence" value="ECO:0007669"/>
    <property type="project" value="EnsemblFungi"/>
</dbReference>
<dbReference type="GO" id="GO:0034551">
    <property type="term" value="P:mitochondrial respiratory chain complex III assembly"/>
    <property type="evidence" value="ECO:0007669"/>
    <property type="project" value="EnsemblFungi"/>
</dbReference>
<dbReference type="CDD" id="cd20267">
    <property type="entry name" value="Complex1_LYR_LYRM7"/>
    <property type="match status" value="1"/>
</dbReference>
<dbReference type="InterPro" id="IPR045298">
    <property type="entry name" value="Complex1_LYR_LYRM7"/>
</dbReference>
<dbReference type="InterPro" id="IPR050435">
    <property type="entry name" value="MZM1/LYRM7"/>
</dbReference>
<dbReference type="PANTHER" id="PTHR46749">
    <property type="entry name" value="COMPLEX III ASSEMBLY FACTOR LYRM7"/>
    <property type="match status" value="1"/>
</dbReference>
<dbReference type="PANTHER" id="PTHR46749:SF1">
    <property type="entry name" value="COMPLEX III ASSEMBLY FACTOR LYRM7"/>
    <property type="match status" value="1"/>
</dbReference>
<name>MZM1_VANPO</name>
<protein>
    <recommendedName>
        <fullName>Mitochondrial zinc maintenance protein 1, mitochondrial</fullName>
    </recommendedName>
</protein>
<feature type="transit peptide" description="Mitochondrion" evidence="2">
    <location>
        <begin position="1"/>
        <end position="15"/>
    </location>
</feature>
<feature type="chain" id="PRO_0000405518" description="Mitochondrial zinc maintenance protein 1, mitochondrial">
    <location>
        <begin position="16"/>
        <end position="127"/>
    </location>
</feature>
<proteinExistence type="inferred from homology"/>
<accession>A7TI92</accession>
<comment type="function">
    <text evidence="1">Assembly factor required for Rieske Fe-S protein RIP1 incorporation into the cytochrome b-c1 (CIII) complex. Functions as a chaperone, binding to this subunit within the mitochondrial matrix and stabilizing it prior to its translocation and insertion into the late CIII dimeric intermediate within the mitochondrial inner membrane. Modulates the mitochondrial matrix zinc pool (By similarity).</text>
</comment>
<comment type="subunit">
    <text evidence="1">Interacts with RIP1.</text>
</comment>
<comment type="subcellular location">
    <subcellularLocation>
        <location evidence="1">Mitochondrion matrix</location>
    </subcellularLocation>
</comment>
<comment type="similarity">
    <text evidence="3">Belongs to the complex I LYR family. MZM1 subfamily.</text>
</comment>
<reference key="1">
    <citation type="journal article" date="2007" name="Proc. Natl. Acad. Sci. U.S.A.">
        <title>Independent sorting-out of thousands of duplicated gene pairs in two yeast species descended from a whole-genome duplication.</title>
        <authorList>
            <person name="Scannell D.R."/>
            <person name="Frank A.C."/>
            <person name="Conant G.C."/>
            <person name="Byrne K.P."/>
            <person name="Woolfit M."/>
            <person name="Wolfe K.H."/>
        </authorList>
    </citation>
    <scope>NUCLEOTIDE SEQUENCE [LARGE SCALE GENOMIC DNA]</scope>
    <source>
        <strain>ATCC 22028 / DSM 70294 / BCRC 21397 / CBS 2163 / NBRC 10782 / NRRL Y-8283 / UCD 57-17</strain>
    </source>
</reference>
<keyword id="KW-0143">Chaperone</keyword>
<keyword id="KW-0496">Mitochondrion</keyword>
<keyword id="KW-1185">Reference proteome</keyword>
<keyword id="KW-0809">Transit peptide</keyword>
<gene>
    <name type="primary">MZM1</name>
    <name type="ORF">Kpol_1054p3</name>
</gene>
<sequence length="127" mass="13743">MSTSQRALGAYRHGLRAARIAFQGDTTMLNAARLKMRQGMEKPNPELSKDQQISLMEDVALFLRRNLVQGKKIKESTTTSDGKDVYRLNIHKDTELGDNDTVKNAKTTLKANGGVGCCGGSGAASKS</sequence>
<evidence type="ECO:0000250" key="1"/>
<evidence type="ECO:0000255" key="2"/>
<evidence type="ECO:0000305" key="3"/>
<organism>
    <name type="scientific">Vanderwaltozyma polyspora (strain ATCC 22028 / DSM 70294 / BCRC 21397 / CBS 2163 / NBRC 10782 / NRRL Y-8283 / UCD 57-17)</name>
    <name type="common">Kluyveromyces polysporus</name>
    <dbReference type="NCBI Taxonomy" id="436907"/>
    <lineage>
        <taxon>Eukaryota</taxon>
        <taxon>Fungi</taxon>
        <taxon>Dikarya</taxon>
        <taxon>Ascomycota</taxon>
        <taxon>Saccharomycotina</taxon>
        <taxon>Saccharomycetes</taxon>
        <taxon>Saccharomycetales</taxon>
        <taxon>Saccharomycetaceae</taxon>
        <taxon>Vanderwaltozyma</taxon>
    </lineage>
</organism>